<sequence>MVSRGPDEWLETIKKCQALTENEMKQLCEMVKELLMEESNIQPVQTPVTVCGDIHGQFHDLLELFRTAGGFPDDINYIFLGDYVDRGYYSLETFTLLMCLKVKYPAKITLVRGNHESRQITQVYGFYEECLNKYGSTTVWKYCCQVFDFLTLAAIIDGKILCVHGGLSPEIRMLDQIRVLSRAQEVPHEGGFSDLLWSDPDNVEAWQVSPRGAGWLFGSKVAREFNHVNGLNLIARAHQLVMEGFKYHFPEKDVVTVWSAPNYCYRCGNVASVMKVDEDLEPTFKIFSAVPDDYIRESTANHNNQRAGYFL</sequence>
<proteinExistence type="evidence at protein level"/>
<dbReference type="EC" id="3.1.3.16"/>
<dbReference type="EMBL" id="M24395">
    <property type="protein sequence ID" value="AAA56864.1"/>
    <property type="molecule type" value="Genomic_DNA"/>
</dbReference>
<dbReference type="EMBL" id="Z71781">
    <property type="protein sequence ID" value="CAA96442.1"/>
    <property type="molecule type" value="Genomic_DNA"/>
</dbReference>
<dbReference type="EMBL" id="Z74095">
    <property type="protein sequence ID" value="CAA98609.1"/>
    <property type="molecule type" value="Genomic_DNA"/>
</dbReference>
<dbReference type="EMBL" id="BK006938">
    <property type="protein sequence ID" value="DAA11808.1"/>
    <property type="molecule type" value="Genomic_DNA"/>
</dbReference>
<dbReference type="PIR" id="A31874">
    <property type="entry name" value="PABY1"/>
</dbReference>
<dbReference type="RefSeq" id="NP_010236.1">
    <property type="nucleotide sequence ID" value="NM_001180106.1"/>
</dbReference>
<dbReference type="SMR" id="P20604"/>
<dbReference type="BioGRID" id="32011">
    <property type="interactions" value="210"/>
</dbReference>
<dbReference type="ComplexPortal" id="CPX-1863">
    <property type="entry name" value="TAP42-RRD1-SIT4 phosphatase complex"/>
</dbReference>
<dbReference type="ComplexPortal" id="CPX-1864">
    <property type="entry name" value="SIT4-SAP155 phosphatase complex"/>
</dbReference>
<dbReference type="ComplexPortal" id="CPX-1865">
    <property type="entry name" value="SIT4-SAP185 phosphatase complex"/>
</dbReference>
<dbReference type="ComplexPortal" id="CPX-1866">
    <property type="entry name" value="SIT4-SAP190 phosphatase complex"/>
</dbReference>
<dbReference type="DIP" id="DIP-5850N"/>
<dbReference type="FunCoup" id="P20604">
    <property type="interactions" value="1114"/>
</dbReference>
<dbReference type="IntAct" id="P20604">
    <property type="interactions" value="103"/>
</dbReference>
<dbReference type="MINT" id="P20604"/>
<dbReference type="STRING" id="4932.YDL047W"/>
<dbReference type="iPTMnet" id="P20604"/>
<dbReference type="PaxDb" id="4932-YDL047W"/>
<dbReference type="PeptideAtlas" id="P20604"/>
<dbReference type="EnsemblFungi" id="YDL047W_mRNA">
    <property type="protein sequence ID" value="YDL047W"/>
    <property type="gene ID" value="YDL047W"/>
</dbReference>
<dbReference type="GeneID" id="851513"/>
<dbReference type="KEGG" id="sce:YDL047W"/>
<dbReference type="AGR" id="SGD:S000002205"/>
<dbReference type="SGD" id="S000002205">
    <property type="gene designation" value="SIT4"/>
</dbReference>
<dbReference type="VEuPathDB" id="FungiDB:YDL047W"/>
<dbReference type="eggNOG" id="KOG0373">
    <property type="taxonomic scope" value="Eukaryota"/>
</dbReference>
<dbReference type="GeneTree" id="ENSGT00550000074961"/>
<dbReference type="HOGENOM" id="CLU_004962_8_1_1"/>
<dbReference type="InParanoid" id="P20604"/>
<dbReference type="OMA" id="MCLKVKY"/>
<dbReference type="OrthoDB" id="1930084at2759"/>
<dbReference type="BioCyc" id="YEAST:G3O-29466-MONOMER"/>
<dbReference type="Reactome" id="R-SCE-204005">
    <property type="pathway name" value="COPII-mediated vesicle transport"/>
</dbReference>
<dbReference type="BioGRID-ORCS" id="851513">
    <property type="hits" value="4 hits in 10 CRISPR screens"/>
</dbReference>
<dbReference type="PRO" id="PR:P20604"/>
<dbReference type="Proteomes" id="UP000002311">
    <property type="component" value="Chromosome IV"/>
</dbReference>
<dbReference type="RNAct" id="P20604">
    <property type="molecule type" value="protein"/>
</dbReference>
<dbReference type="GO" id="GO:0005737">
    <property type="term" value="C:cytoplasm"/>
    <property type="evidence" value="ECO:0000314"/>
    <property type="project" value="SGD"/>
</dbReference>
<dbReference type="GO" id="GO:0005634">
    <property type="term" value="C:nucleus"/>
    <property type="evidence" value="ECO:0007005"/>
    <property type="project" value="SGD"/>
</dbReference>
<dbReference type="GO" id="GO:0000159">
    <property type="term" value="C:protein phosphatase type 2A complex"/>
    <property type="evidence" value="ECO:0000314"/>
    <property type="project" value="SGD"/>
</dbReference>
<dbReference type="GO" id="GO:0008287">
    <property type="term" value="C:protein serine/threonine phosphatase complex"/>
    <property type="evidence" value="ECO:0000353"/>
    <property type="project" value="ComplexPortal"/>
</dbReference>
<dbReference type="GO" id="GO:0046872">
    <property type="term" value="F:metal ion binding"/>
    <property type="evidence" value="ECO:0007669"/>
    <property type="project" value="UniProtKB-KW"/>
</dbReference>
<dbReference type="GO" id="GO:0004722">
    <property type="term" value="F:protein serine/threonine phosphatase activity"/>
    <property type="evidence" value="ECO:0000315"/>
    <property type="project" value="SGD"/>
</dbReference>
<dbReference type="GO" id="GO:0051301">
    <property type="term" value="P:cell division"/>
    <property type="evidence" value="ECO:0007669"/>
    <property type="project" value="UniProtKB-KW"/>
</dbReference>
<dbReference type="GO" id="GO:0034599">
    <property type="term" value="P:cellular response to oxidative stress"/>
    <property type="evidence" value="ECO:0000315"/>
    <property type="project" value="SGD"/>
</dbReference>
<dbReference type="GO" id="GO:0006281">
    <property type="term" value="P:DNA repair"/>
    <property type="evidence" value="ECO:0000315"/>
    <property type="project" value="SGD"/>
</dbReference>
<dbReference type="GO" id="GO:0000082">
    <property type="term" value="P:G1/S transition of mitotic cell cycle"/>
    <property type="evidence" value="ECO:0000315"/>
    <property type="project" value="SGD"/>
</dbReference>
<dbReference type="GO" id="GO:0035556">
    <property type="term" value="P:intracellular signal transduction"/>
    <property type="evidence" value="ECO:0000315"/>
    <property type="project" value="SGD"/>
</dbReference>
<dbReference type="GO" id="GO:0032956">
    <property type="term" value="P:regulation of actin cytoskeleton organization"/>
    <property type="evidence" value="ECO:0000315"/>
    <property type="project" value="SGD"/>
</dbReference>
<dbReference type="GO" id="GO:0060237">
    <property type="term" value="P:regulation of fungal-type cell wall organization"/>
    <property type="evidence" value="ECO:0000315"/>
    <property type="project" value="SGD"/>
</dbReference>
<dbReference type="GO" id="GO:1903432">
    <property type="term" value="P:regulation of TORC1 signaling"/>
    <property type="evidence" value="ECO:0000315"/>
    <property type="project" value="SGD"/>
</dbReference>
<dbReference type="GO" id="GO:0031929">
    <property type="term" value="P:TOR signaling"/>
    <property type="evidence" value="ECO:0000303"/>
    <property type="project" value="ComplexPortal"/>
</dbReference>
<dbReference type="GO" id="GO:0002098">
    <property type="term" value="P:tRNA wobble uridine modification"/>
    <property type="evidence" value="ECO:0000315"/>
    <property type="project" value="SGD"/>
</dbReference>
<dbReference type="CDD" id="cd07415">
    <property type="entry name" value="MPP_PP2A_PP4_PP6"/>
    <property type="match status" value="1"/>
</dbReference>
<dbReference type="FunFam" id="3.60.21.10:FF:000005">
    <property type="entry name" value="Serine/threonine-protein phosphatase"/>
    <property type="match status" value="1"/>
</dbReference>
<dbReference type="Gene3D" id="3.60.21.10">
    <property type="match status" value="1"/>
</dbReference>
<dbReference type="InterPro" id="IPR004843">
    <property type="entry name" value="Calcineurin-like_PHP_ApaH"/>
</dbReference>
<dbReference type="InterPro" id="IPR029052">
    <property type="entry name" value="Metallo-depent_PP-like"/>
</dbReference>
<dbReference type="InterPro" id="IPR047129">
    <property type="entry name" value="PPA2-like"/>
</dbReference>
<dbReference type="InterPro" id="IPR006186">
    <property type="entry name" value="Ser/Thr-sp_prot-phosphatase"/>
</dbReference>
<dbReference type="PANTHER" id="PTHR45619">
    <property type="entry name" value="SERINE/THREONINE-PROTEIN PHOSPHATASE PP2A-RELATED"/>
    <property type="match status" value="1"/>
</dbReference>
<dbReference type="Pfam" id="PF00149">
    <property type="entry name" value="Metallophos"/>
    <property type="match status" value="1"/>
</dbReference>
<dbReference type="PRINTS" id="PR00114">
    <property type="entry name" value="STPHPHTASE"/>
</dbReference>
<dbReference type="SMART" id="SM00156">
    <property type="entry name" value="PP2Ac"/>
    <property type="match status" value="1"/>
</dbReference>
<dbReference type="SUPFAM" id="SSF56300">
    <property type="entry name" value="Metallo-dependent phosphatases"/>
    <property type="match status" value="1"/>
</dbReference>
<dbReference type="PROSITE" id="PS00125">
    <property type="entry name" value="SER_THR_PHOSPHATASE"/>
    <property type="match status" value="1"/>
</dbReference>
<organism>
    <name type="scientific">Saccharomyces cerevisiae (strain ATCC 204508 / S288c)</name>
    <name type="common">Baker's yeast</name>
    <dbReference type="NCBI Taxonomy" id="559292"/>
    <lineage>
        <taxon>Eukaryota</taxon>
        <taxon>Fungi</taxon>
        <taxon>Dikarya</taxon>
        <taxon>Ascomycota</taxon>
        <taxon>Saccharomycotina</taxon>
        <taxon>Saccharomycetes</taxon>
        <taxon>Saccharomycetales</taxon>
        <taxon>Saccharomycetaceae</taxon>
        <taxon>Saccharomyces</taxon>
    </lineage>
</organism>
<protein>
    <recommendedName>
        <fullName>Serine/threonine-protein phosphatase PP1-1</fullName>
        <ecNumber>3.1.3.16</ecNumber>
    </recommendedName>
</protein>
<name>PP11_YEAST</name>
<feature type="chain" id="PRO_0000058881" description="Serine/threonine-protein phosphatase PP1-1">
    <location>
        <begin position="1"/>
        <end position="311"/>
    </location>
</feature>
<feature type="active site" description="Proton donor" evidence="1">
    <location>
        <position position="115"/>
    </location>
</feature>
<feature type="binding site" evidence="1">
    <location>
        <position position="53"/>
    </location>
    <ligand>
        <name>Mn(2+)</name>
        <dbReference type="ChEBI" id="CHEBI:29035"/>
        <label>1</label>
    </ligand>
</feature>
<feature type="binding site" evidence="1">
    <location>
        <position position="55"/>
    </location>
    <ligand>
        <name>Mn(2+)</name>
        <dbReference type="ChEBI" id="CHEBI:29035"/>
        <label>1</label>
    </ligand>
</feature>
<feature type="binding site" evidence="1">
    <location>
        <position position="82"/>
    </location>
    <ligand>
        <name>Mn(2+)</name>
        <dbReference type="ChEBI" id="CHEBI:29035"/>
        <label>1</label>
    </ligand>
</feature>
<feature type="binding site" evidence="1">
    <location>
        <position position="82"/>
    </location>
    <ligand>
        <name>Mn(2+)</name>
        <dbReference type="ChEBI" id="CHEBI:29035"/>
        <label>2</label>
    </ligand>
</feature>
<feature type="binding site" evidence="1">
    <location>
        <position position="114"/>
    </location>
    <ligand>
        <name>Mn(2+)</name>
        <dbReference type="ChEBI" id="CHEBI:29035"/>
        <label>2</label>
    </ligand>
</feature>
<feature type="binding site" evidence="1">
    <location>
        <position position="164"/>
    </location>
    <ligand>
        <name>Mn(2+)</name>
        <dbReference type="ChEBI" id="CHEBI:29035"/>
        <label>2</label>
    </ligand>
</feature>
<feature type="binding site" evidence="1">
    <location>
        <position position="238"/>
    </location>
    <ligand>
        <name>Mn(2+)</name>
        <dbReference type="ChEBI" id="CHEBI:29035"/>
        <label>2</label>
    </ligand>
</feature>
<feature type="mutagenesis site" description="Reduced interaction with TAP42." evidence="3">
    <original>L</original>
    <variation>A</variation>
    <location>
        <position position="35"/>
    </location>
</feature>
<feature type="mutagenesis site" description="Nearly no interaction with TAP42." evidence="3">
    <original>EE</original>
    <variation>AA</variation>
    <location>
        <begin position="37"/>
        <end position="38"/>
    </location>
</feature>
<feature type="mutagenesis site" description="Normal interaction with TAP42." evidence="3">
    <original>E</original>
    <variation>A</variation>
    <location>
        <position position="38"/>
    </location>
</feature>
<feature type="mutagenesis site" description="Normal interaction with TAP42." evidence="3">
    <original>N</original>
    <variation>A</variation>
    <location>
        <position position="40"/>
    </location>
</feature>
<comment type="function">
    <text>Involved in the dephosphorylation of the large subunit of RNA polymerase II. Is required in late G1 for normal G1 cyclin expression, bud initiation and expression of certain genes that are periodically expressed during late G1. Associates with the SAP proteins in a cell cycle-dependent manner.</text>
</comment>
<comment type="catalytic activity">
    <reaction>
        <text>O-phospho-L-seryl-[protein] + H2O = L-seryl-[protein] + phosphate</text>
        <dbReference type="Rhea" id="RHEA:20629"/>
        <dbReference type="Rhea" id="RHEA-COMP:9863"/>
        <dbReference type="Rhea" id="RHEA-COMP:11604"/>
        <dbReference type="ChEBI" id="CHEBI:15377"/>
        <dbReference type="ChEBI" id="CHEBI:29999"/>
        <dbReference type="ChEBI" id="CHEBI:43474"/>
        <dbReference type="ChEBI" id="CHEBI:83421"/>
        <dbReference type="EC" id="3.1.3.16"/>
    </reaction>
</comment>
<comment type="catalytic activity">
    <reaction>
        <text>O-phospho-L-threonyl-[protein] + H2O = L-threonyl-[protein] + phosphate</text>
        <dbReference type="Rhea" id="RHEA:47004"/>
        <dbReference type="Rhea" id="RHEA-COMP:11060"/>
        <dbReference type="Rhea" id="RHEA-COMP:11605"/>
        <dbReference type="ChEBI" id="CHEBI:15377"/>
        <dbReference type="ChEBI" id="CHEBI:30013"/>
        <dbReference type="ChEBI" id="CHEBI:43474"/>
        <dbReference type="ChEBI" id="CHEBI:61977"/>
        <dbReference type="EC" id="3.1.3.16"/>
    </reaction>
</comment>
<comment type="cofactor">
    <cofactor evidence="1">
        <name>Mn(2+)</name>
        <dbReference type="ChEBI" id="CHEBI:29035"/>
    </cofactor>
    <text evidence="1">Binds 2 manganese ions per subunit.</text>
</comment>
<comment type="subunit">
    <text evidence="2 3 5 6">Inactivated in a complex with phosphatase methylesterase PPE1 (PP2Ai). Interacts with phosphatase 2A activator RRD1, which can reactivate PP2Ai by dissociating the catalytic subunit from the complex. Forms a ternary complex with RRD1-TAP42.</text>
</comment>
<comment type="interaction">
    <interactant intactId="EBI-13707">
        <id>P20604</id>
    </interactant>
    <interactant intactId="EBI-25278">
        <id>P40454</id>
        <label>RRD1</label>
    </interactant>
    <organismsDiffer>false</organismsDiffer>
    <experiments>4</experiments>
</comment>
<comment type="interaction">
    <interactant intactId="EBI-13707">
        <id>P20604</id>
    </interactant>
    <interactant intactId="EBI-16370">
        <id>P43612</id>
        <label>SAP155</label>
    </interactant>
    <organismsDiffer>false</organismsDiffer>
    <experiments>10</experiments>
</comment>
<comment type="interaction">
    <interactant intactId="EBI-13707">
        <id>P20604</id>
    </interactant>
    <interactant intactId="EBI-16384">
        <id>P40856</id>
        <label>SAP185</label>
    </interactant>
    <organismsDiffer>false</organismsDiffer>
    <experiments>10</experiments>
</comment>
<comment type="interaction">
    <interactant intactId="EBI-13707">
        <id>P20604</id>
    </interactant>
    <interactant intactId="EBI-16392">
        <id>P36123</id>
        <label>SAP190</label>
    </interactant>
    <organismsDiffer>false</organismsDiffer>
    <experiments>4</experiments>
</comment>
<comment type="interaction">
    <interactant intactId="EBI-13707">
        <id>P20604</id>
    </interactant>
    <interactant intactId="EBI-18926">
        <id>Q04372</id>
        <label>TAP42</label>
    </interactant>
    <organismsDiffer>false</organismsDiffer>
    <experiments>8</experiments>
</comment>
<comment type="subcellular location">
    <subcellularLocation>
        <location>Cytoplasm</location>
    </subcellularLocation>
</comment>
<comment type="developmental stage">
    <text>Functions in the late cell cycle G1 phase for progression into the S phase, possibly associated in two separate complexes with the phosphorylated forms of p155 and p190, two high MW proteins.</text>
</comment>
<comment type="miscellaneous">
    <text evidence="4">Present with 3970 molecules/cell in log phase SD medium.</text>
</comment>
<comment type="similarity">
    <text evidence="7">Belongs to the PPP phosphatase family. PP-6 (PP-V) subfamily.</text>
</comment>
<keyword id="KW-0131">Cell cycle</keyword>
<keyword id="KW-0132">Cell division</keyword>
<keyword id="KW-0963">Cytoplasm</keyword>
<keyword id="KW-0378">Hydrolase</keyword>
<keyword id="KW-0464">Manganese</keyword>
<keyword id="KW-0479">Metal-binding</keyword>
<keyword id="KW-0498">Mitosis</keyword>
<keyword id="KW-0904">Protein phosphatase</keyword>
<keyword id="KW-1185">Reference proteome</keyword>
<reference key="1">
    <citation type="journal article" date="1989" name="Cell">
        <title>A suppressor of a HIS4 transcriptional defect encodes a protein with homology to the catalytic subunit of protein phosphatases.</title>
        <authorList>
            <person name="Arndt K.T."/>
            <person name="Styles C.A."/>
            <person name="Fink G.R."/>
        </authorList>
    </citation>
    <scope>NUCLEOTIDE SEQUENCE [GENOMIC DNA]</scope>
</reference>
<reference key="2">
    <citation type="journal article" date="1997" name="Nature">
        <title>The nucleotide sequence of Saccharomyces cerevisiae chromosome IV.</title>
        <authorList>
            <person name="Jacq C."/>
            <person name="Alt-Moerbe J."/>
            <person name="Andre B."/>
            <person name="Arnold W."/>
            <person name="Bahr A."/>
            <person name="Ballesta J.P.G."/>
            <person name="Bargues M."/>
            <person name="Baron L."/>
            <person name="Becker A."/>
            <person name="Biteau N."/>
            <person name="Bloecker H."/>
            <person name="Blugeon C."/>
            <person name="Boskovic J."/>
            <person name="Brandt P."/>
            <person name="Brueckner M."/>
            <person name="Buitrago M.J."/>
            <person name="Coster F."/>
            <person name="Delaveau T."/>
            <person name="del Rey F."/>
            <person name="Dujon B."/>
            <person name="Eide L.G."/>
            <person name="Garcia-Cantalejo J.M."/>
            <person name="Goffeau A."/>
            <person name="Gomez-Peris A."/>
            <person name="Granotier C."/>
            <person name="Hanemann V."/>
            <person name="Hankeln T."/>
            <person name="Hoheisel J.D."/>
            <person name="Jaeger W."/>
            <person name="Jimenez A."/>
            <person name="Jonniaux J.-L."/>
            <person name="Kraemer C."/>
            <person name="Kuester H."/>
            <person name="Laamanen P."/>
            <person name="Legros Y."/>
            <person name="Louis E.J."/>
            <person name="Moeller-Rieker S."/>
            <person name="Monnet A."/>
            <person name="Moro M."/>
            <person name="Mueller-Auer S."/>
            <person name="Nussbaumer B."/>
            <person name="Paricio N."/>
            <person name="Paulin L."/>
            <person name="Perea J."/>
            <person name="Perez-Alonso M."/>
            <person name="Perez-Ortin J.E."/>
            <person name="Pohl T.M."/>
            <person name="Prydz H."/>
            <person name="Purnelle B."/>
            <person name="Rasmussen S.W."/>
            <person name="Remacha M.A."/>
            <person name="Revuelta J.L."/>
            <person name="Rieger M."/>
            <person name="Salom D."/>
            <person name="Saluz H.P."/>
            <person name="Saiz J.E."/>
            <person name="Saren A.-M."/>
            <person name="Schaefer M."/>
            <person name="Scharfe M."/>
            <person name="Schmidt E.R."/>
            <person name="Schneider C."/>
            <person name="Scholler P."/>
            <person name="Schwarz S."/>
            <person name="Soler-Mira A."/>
            <person name="Urrestarazu L.A."/>
            <person name="Verhasselt P."/>
            <person name="Vissers S."/>
            <person name="Voet M."/>
            <person name="Volckaert G."/>
            <person name="Wagner G."/>
            <person name="Wambutt R."/>
            <person name="Wedler E."/>
            <person name="Wedler H."/>
            <person name="Woelfl S."/>
            <person name="Harris D.E."/>
            <person name="Bowman S."/>
            <person name="Brown D."/>
            <person name="Churcher C.M."/>
            <person name="Connor R."/>
            <person name="Dedman K."/>
            <person name="Gentles S."/>
            <person name="Hamlin N."/>
            <person name="Hunt S."/>
            <person name="Jones L."/>
            <person name="McDonald S."/>
            <person name="Murphy L.D."/>
            <person name="Niblett D."/>
            <person name="Odell C."/>
            <person name="Oliver K."/>
            <person name="Rajandream M.A."/>
            <person name="Richards C."/>
            <person name="Shore L."/>
            <person name="Walsh S.V."/>
            <person name="Barrell B.G."/>
            <person name="Dietrich F.S."/>
            <person name="Mulligan J.T."/>
            <person name="Allen E."/>
            <person name="Araujo R."/>
            <person name="Aviles E."/>
            <person name="Berno A."/>
            <person name="Carpenter J."/>
            <person name="Chen E."/>
            <person name="Cherry J.M."/>
            <person name="Chung E."/>
            <person name="Duncan M."/>
            <person name="Hunicke-Smith S."/>
            <person name="Hyman R.W."/>
            <person name="Komp C."/>
            <person name="Lashkari D."/>
            <person name="Lew H."/>
            <person name="Lin D."/>
            <person name="Mosedale D."/>
            <person name="Nakahara K."/>
            <person name="Namath A."/>
            <person name="Oefner P."/>
            <person name="Oh C."/>
            <person name="Petel F.X."/>
            <person name="Roberts D."/>
            <person name="Schramm S."/>
            <person name="Schroeder M."/>
            <person name="Shogren T."/>
            <person name="Shroff N."/>
            <person name="Winant A."/>
            <person name="Yelton M.A."/>
            <person name="Botstein D."/>
            <person name="Davis R.W."/>
            <person name="Johnston M."/>
            <person name="Andrews S."/>
            <person name="Brinkman R."/>
            <person name="Cooper J."/>
            <person name="Ding H."/>
            <person name="Du Z."/>
            <person name="Favello A."/>
            <person name="Fulton L."/>
            <person name="Gattung S."/>
            <person name="Greco T."/>
            <person name="Hallsworth K."/>
            <person name="Hawkins J."/>
            <person name="Hillier L.W."/>
            <person name="Jier M."/>
            <person name="Johnson D."/>
            <person name="Johnston L."/>
            <person name="Kirsten J."/>
            <person name="Kucaba T."/>
            <person name="Langston Y."/>
            <person name="Latreille P."/>
            <person name="Le T."/>
            <person name="Mardis E."/>
            <person name="Menezes S."/>
            <person name="Miller N."/>
            <person name="Nhan M."/>
            <person name="Pauley A."/>
            <person name="Peluso D."/>
            <person name="Rifkin L."/>
            <person name="Riles L."/>
            <person name="Taich A."/>
            <person name="Trevaskis E."/>
            <person name="Vignati D."/>
            <person name="Wilcox L."/>
            <person name="Wohldman P."/>
            <person name="Vaudin M."/>
            <person name="Wilson R."/>
            <person name="Waterston R."/>
            <person name="Albermann K."/>
            <person name="Hani J."/>
            <person name="Heumann K."/>
            <person name="Kleine K."/>
            <person name="Mewes H.-W."/>
            <person name="Zollner A."/>
            <person name="Zaccaria P."/>
        </authorList>
    </citation>
    <scope>NUCLEOTIDE SEQUENCE [LARGE SCALE GENOMIC DNA]</scope>
    <source>
        <strain>ATCC 204508 / S288c</strain>
    </source>
</reference>
<reference key="3">
    <citation type="journal article" date="2014" name="G3 (Bethesda)">
        <title>The reference genome sequence of Saccharomyces cerevisiae: Then and now.</title>
        <authorList>
            <person name="Engel S.R."/>
            <person name="Dietrich F.S."/>
            <person name="Fisk D.G."/>
            <person name="Binkley G."/>
            <person name="Balakrishnan R."/>
            <person name="Costanzo M.C."/>
            <person name="Dwight S.S."/>
            <person name="Hitz B.C."/>
            <person name="Karra K."/>
            <person name="Nash R.S."/>
            <person name="Weng S."/>
            <person name="Wong E.D."/>
            <person name="Lloyd P."/>
            <person name="Skrzypek M.S."/>
            <person name="Miyasato S.R."/>
            <person name="Simison M."/>
            <person name="Cherry J.M."/>
        </authorList>
    </citation>
    <scope>GENOME REANNOTATION</scope>
    <source>
        <strain>ATCC 204508 / S288c</strain>
    </source>
</reference>
<reference key="4">
    <citation type="journal article" date="1991" name="Mol. Cell. Biol.">
        <title>The SIT4 protein phosphatase functions in late G1 for progression into S phase.</title>
        <authorList>
            <person name="Sutton A."/>
            <person name="Immanuel D."/>
            <person name="Arndt K.T."/>
        </authorList>
    </citation>
    <scope>CHARACTERIZATION</scope>
</reference>
<reference key="5">
    <citation type="journal article" date="2003" name="Mol. Biol. Cell">
        <title>Interaction with Tap42 is required for the essential function of Sit4 and type 2A phosphatases.</title>
        <authorList>
            <person name="Wang H."/>
            <person name="Wang X."/>
            <person name="Jiang Y."/>
        </authorList>
    </citation>
    <scope>INTERACTION WITH TAP42</scope>
    <scope>MUTAGENESIS OF LEU-35; 37-GLU-GLU-38; GLU-38 AND ASN-40</scope>
</reference>
<reference key="6">
    <citation type="journal article" date="2003" name="Mol. Cell">
        <title>Multiple roles of Tap42 in mediating rapamycin-induced transcriptional changes in yeast.</title>
        <authorList>
            <person name="Duevel K."/>
            <person name="Santhanam A."/>
            <person name="Garrett S."/>
            <person name="Schneper L."/>
            <person name="Broach J.R."/>
        </authorList>
    </citation>
    <scope>INTERACTION WITH TAP42</scope>
</reference>
<reference key="7">
    <citation type="journal article" date="2003" name="Nature">
        <title>Global analysis of protein expression in yeast.</title>
        <authorList>
            <person name="Ghaemmaghami S."/>
            <person name="Huh W.-K."/>
            <person name="Bower K."/>
            <person name="Howson R.W."/>
            <person name="Belle A."/>
            <person name="Dephoure N."/>
            <person name="O'Shea E.K."/>
            <person name="Weissman J.S."/>
        </authorList>
    </citation>
    <scope>LEVEL OF PROTEIN EXPRESSION [LARGE SCALE ANALYSIS]</scope>
</reference>
<reference key="8">
    <citation type="journal article" date="2005" name="Biochem. J.">
        <title>Specific interactions of PP2A and PP2A-like phosphatases with the yeast PTPA homologues, Ypa1 and Ypa2.</title>
        <authorList>
            <person name="Van Hoof C."/>
            <person name="Martens E."/>
            <person name="Longin S."/>
            <person name="Jordens J."/>
            <person name="Stevens I."/>
            <person name="Janssens V."/>
            <person name="Goris J."/>
        </authorList>
    </citation>
    <scope>INTERACTION WITH PPE1 AND RRD1</scope>
</reference>
<reference key="9">
    <citation type="journal article" date="2005" name="Mol. Biol. Cell">
        <title>The yeast phosphotyrosyl phosphatase activator is part of the Tap42-phosphatase complexes.</title>
        <authorList>
            <person name="Zheng Y."/>
            <person name="Jiang Y."/>
        </authorList>
    </citation>
    <scope>INTERACTION WITH RRD1 AND TAP42</scope>
</reference>
<evidence type="ECO:0000250" key="1"/>
<evidence type="ECO:0000269" key="2">
    <source>
    </source>
</evidence>
<evidence type="ECO:0000269" key="3">
    <source>
    </source>
</evidence>
<evidence type="ECO:0000269" key="4">
    <source>
    </source>
</evidence>
<evidence type="ECO:0000269" key="5">
    <source>
    </source>
</evidence>
<evidence type="ECO:0000269" key="6">
    <source>
    </source>
</evidence>
<evidence type="ECO:0000305" key="7"/>
<gene>
    <name type="primary">SIT4</name>
    <name type="synonym">PPH1</name>
    <name type="ordered locus">YDL047W</name>
    <name type="ORF">D2693</name>
</gene>
<accession>P20604</accession>
<accession>D6VRU8</accession>